<organism>
    <name type="scientific">Escherichia coli O139:H28 (strain E24377A / ETEC)</name>
    <dbReference type="NCBI Taxonomy" id="331111"/>
    <lineage>
        <taxon>Bacteria</taxon>
        <taxon>Pseudomonadati</taxon>
        <taxon>Pseudomonadota</taxon>
        <taxon>Gammaproteobacteria</taxon>
        <taxon>Enterobacterales</taxon>
        <taxon>Enterobacteriaceae</taxon>
        <taxon>Escherichia</taxon>
    </lineage>
</organism>
<feature type="chain" id="PRO_0000369178" description="HTH-type transcriptional regulator EcpR">
    <location>
        <begin position="1"/>
        <end position="196"/>
    </location>
</feature>
<feature type="domain" description="HTH luxR-type" evidence="2">
    <location>
        <begin position="138"/>
        <end position="196"/>
    </location>
</feature>
<feature type="DNA-binding region" description="H-T-H motif" evidence="2">
    <location>
        <begin position="162"/>
        <end position="181"/>
    </location>
</feature>
<name>ECPR_ECO24</name>
<comment type="function">
    <text evidence="1">Part of the ecpRABCDE operon, which encodes the E.coli common pilus (ECP). ECP is found in both commensal and pathogenic strains and plays a dual role in early-stage biofilm development and host cell recognition. Positively regulates the expression of the ecp operon (By similarity).</text>
</comment>
<comment type="subcellular location">
    <subcellularLocation>
        <location evidence="3">Cytoplasm</location>
    </subcellularLocation>
</comment>
<comment type="induction">
    <text evidence="1">Negatively regulated by H-NS. Positively autoregulated. Also positively regulated by IHF (By similarity).</text>
</comment>
<comment type="similarity">
    <text evidence="3">Belongs to the EcpR/MatA family.</text>
</comment>
<evidence type="ECO:0000250" key="1"/>
<evidence type="ECO:0000255" key="2">
    <source>
        <dbReference type="PROSITE-ProRule" id="PRU00411"/>
    </source>
</evidence>
<evidence type="ECO:0000305" key="3"/>
<reference key="1">
    <citation type="journal article" date="2008" name="J. Bacteriol.">
        <title>The pangenome structure of Escherichia coli: comparative genomic analysis of E. coli commensal and pathogenic isolates.</title>
        <authorList>
            <person name="Rasko D.A."/>
            <person name="Rosovitz M.J."/>
            <person name="Myers G.S.A."/>
            <person name="Mongodin E.F."/>
            <person name="Fricke W.F."/>
            <person name="Gajer P."/>
            <person name="Crabtree J."/>
            <person name="Sebaihia M."/>
            <person name="Thomson N.R."/>
            <person name="Chaudhuri R."/>
            <person name="Henderson I.R."/>
            <person name="Sperandio V."/>
            <person name="Ravel J."/>
        </authorList>
    </citation>
    <scope>NUCLEOTIDE SEQUENCE [LARGE SCALE GENOMIC DNA]</scope>
    <source>
        <strain>E24377A / ETEC</strain>
    </source>
</reference>
<dbReference type="EMBL" id="CP000800">
    <property type="protein sequence ID" value="ABV17890.1"/>
    <property type="molecule type" value="Genomic_DNA"/>
</dbReference>
<dbReference type="SMR" id="A7ZI28"/>
<dbReference type="KEGG" id="ecw:EcE24377A_0304"/>
<dbReference type="HOGENOM" id="CLU_128111_0_0_6"/>
<dbReference type="Proteomes" id="UP000001122">
    <property type="component" value="Chromosome"/>
</dbReference>
<dbReference type="GO" id="GO:0005737">
    <property type="term" value="C:cytoplasm"/>
    <property type="evidence" value="ECO:0007669"/>
    <property type="project" value="UniProtKB-SubCell"/>
</dbReference>
<dbReference type="GO" id="GO:0003677">
    <property type="term" value="F:DNA binding"/>
    <property type="evidence" value="ECO:0007669"/>
    <property type="project" value="UniProtKB-KW"/>
</dbReference>
<dbReference type="GO" id="GO:0006355">
    <property type="term" value="P:regulation of DNA-templated transcription"/>
    <property type="evidence" value="ECO:0007669"/>
    <property type="project" value="InterPro"/>
</dbReference>
<dbReference type="CDD" id="cd06170">
    <property type="entry name" value="LuxR_C_like"/>
    <property type="match status" value="1"/>
</dbReference>
<dbReference type="Gene3D" id="1.10.10.10">
    <property type="entry name" value="Winged helix-like DNA-binding domain superfamily/Winged helix DNA-binding domain"/>
    <property type="match status" value="1"/>
</dbReference>
<dbReference type="InterPro" id="IPR016032">
    <property type="entry name" value="Sig_transdc_resp-reg_C-effctor"/>
</dbReference>
<dbReference type="InterPro" id="IPR000792">
    <property type="entry name" value="Tscrpt_reg_LuxR_C"/>
</dbReference>
<dbReference type="InterPro" id="IPR036388">
    <property type="entry name" value="WH-like_DNA-bd_sf"/>
</dbReference>
<dbReference type="Pfam" id="PF00196">
    <property type="entry name" value="GerE"/>
    <property type="match status" value="1"/>
</dbReference>
<dbReference type="PRINTS" id="PR00038">
    <property type="entry name" value="HTHLUXR"/>
</dbReference>
<dbReference type="SMART" id="SM00421">
    <property type="entry name" value="HTH_LUXR"/>
    <property type="match status" value="1"/>
</dbReference>
<dbReference type="SUPFAM" id="SSF46894">
    <property type="entry name" value="C-terminal effector domain of the bipartite response regulators"/>
    <property type="match status" value="1"/>
</dbReference>
<dbReference type="PROSITE" id="PS50043">
    <property type="entry name" value="HTH_LUXR_2"/>
    <property type="match status" value="1"/>
</dbReference>
<accession>A7ZI28</accession>
<keyword id="KW-0010">Activator</keyword>
<keyword id="KW-0963">Cytoplasm</keyword>
<keyword id="KW-0238">DNA-binding</keyword>
<keyword id="KW-1185">Reference proteome</keyword>
<keyword id="KW-0804">Transcription</keyword>
<keyword id="KW-0805">Transcription regulation</keyword>
<gene>
    <name type="primary">ecpR</name>
    <name type="synonym">matA</name>
    <name type="ordered locus">EcE24377A_0304</name>
</gene>
<sequence length="196" mass="23246">MTWQSDYSRDYEVKNHMECQNRSDKYIWSPHDAYFYKGLSELIVDIDRLIYLSLEKIRKDFVFINLSTDSLSEFINRDNEWLSAVKGKQVVLIAARKSEALANYWYYNSNIRGVVYAGLSRDIRKELAYVINGRFLRKDIKKDKITDREMEIIRMTAQGMQPKSIARIENCSVKTVYTHRRNAEAKLYSKIYKLVQ</sequence>
<protein>
    <recommendedName>
        <fullName>HTH-type transcriptional regulator EcpR</fullName>
    </recommendedName>
</protein>
<proteinExistence type="inferred from homology"/>